<keyword id="KW-0963">Cytoplasm</keyword>
<keyword id="KW-1185">Reference proteome</keyword>
<sequence length="258" mass="30714">MKITKIEKKKRLYTLELDNTENLYITEDTIVHFMLSKGMIINAEKLENIKKFAQLSYGKNLGLYYISFKQRTEKEVIKYLQQHDIDSKIIPQIIDNLKSENWINDKNYVQSFIQQNLNTGDKGPYVIKQKLLQKGIKSKIIESELQAINFQDLASKISQKLYKKYQNKLPLKALKDKLMQSLTTKGFDYQIVHTVIQNLEIEKDQELEEDLIYKELDKQYQKLSKKHDQYELKQRIINALMRKGYQYEDIKSALREYL</sequence>
<accession>P59210</accession>
<gene>
    <name type="primary">recX</name>
    <name type="ordered locus">SAG0412</name>
</gene>
<reference key="1">
    <citation type="journal article" date="2002" name="Proc. Natl. Acad. Sci. U.S.A.">
        <title>Complete genome sequence and comparative genomic analysis of an emerging human pathogen, serotype V Streptococcus agalactiae.</title>
        <authorList>
            <person name="Tettelin H."/>
            <person name="Masignani V."/>
            <person name="Cieslewicz M.J."/>
            <person name="Eisen J.A."/>
            <person name="Peterson S.N."/>
            <person name="Wessels M.R."/>
            <person name="Paulsen I.T."/>
            <person name="Nelson K.E."/>
            <person name="Margarit I."/>
            <person name="Read T.D."/>
            <person name="Madoff L.C."/>
            <person name="Wolf A.M."/>
            <person name="Beanan M.J."/>
            <person name="Brinkac L.M."/>
            <person name="Daugherty S.C."/>
            <person name="DeBoy R.T."/>
            <person name="Durkin A.S."/>
            <person name="Kolonay J.F."/>
            <person name="Madupu R."/>
            <person name="Lewis M.R."/>
            <person name="Radune D."/>
            <person name="Fedorova N.B."/>
            <person name="Scanlan D."/>
            <person name="Khouri H.M."/>
            <person name="Mulligan S."/>
            <person name="Carty H.A."/>
            <person name="Cline R.T."/>
            <person name="Van Aken S.E."/>
            <person name="Gill J."/>
            <person name="Scarselli M."/>
            <person name="Mora M."/>
            <person name="Iacobini E.T."/>
            <person name="Brettoni C."/>
            <person name="Galli G."/>
            <person name="Mariani M."/>
            <person name="Vegni F."/>
            <person name="Maione D."/>
            <person name="Rinaudo D."/>
            <person name="Rappuoli R."/>
            <person name="Telford J.L."/>
            <person name="Kasper D.L."/>
            <person name="Grandi G."/>
            <person name="Fraser C.M."/>
        </authorList>
    </citation>
    <scope>NUCLEOTIDE SEQUENCE [LARGE SCALE GENOMIC DNA]</scope>
    <source>
        <strain>ATCC BAA-611 / 2603 V/R</strain>
    </source>
</reference>
<dbReference type="EMBL" id="AE009948">
    <property type="protein sequence ID" value="AAM99318.1"/>
    <property type="molecule type" value="Genomic_DNA"/>
</dbReference>
<dbReference type="RefSeq" id="NP_687446.1">
    <property type="nucleotide sequence ID" value="NC_004116.1"/>
</dbReference>
<dbReference type="RefSeq" id="WP_000704972.1">
    <property type="nucleotide sequence ID" value="NC_004116.1"/>
</dbReference>
<dbReference type="SMR" id="P59210"/>
<dbReference type="STRING" id="208435.SAG0412"/>
<dbReference type="KEGG" id="sag:SAG0412"/>
<dbReference type="PATRIC" id="fig|208435.3.peg.407"/>
<dbReference type="HOGENOM" id="CLU_066607_4_0_9"/>
<dbReference type="OrthoDB" id="5421057at2"/>
<dbReference type="Proteomes" id="UP000000821">
    <property type="component" value="Chromosome"/>
</dbReference>
<dbReference type="GO" id="GO:0005737">
    <property type="term" value="C:cytoplasm"/>
    <property type="evidence" value="ECO:0007669"/>
    <property type="project" value="UniProtKB-SubCell"/>
</dbReference>
<dbReference type="GO" id="GO:0006282">
    <property type="term" value="P:regulation of DNA repair"/>
    <property type="evidence" value="ECO:0007669"/>
    <property type="project" value="UniProtKB-UniRule"/>
</dbReference>
<dbReference type="Gene3D" id="1.10.10.10">
    <property type="entry name" value="Winged helix-like DNA-binding domain superfamily/Winged helix DNA-binding domain"/>
    <property type="match status" value="4"/>
</dbReference>
<dbReference type="HAMAP" id="MF_01114">
    <property type="entry name" value="RecX"/>
    <property type="match status" value="1"/>
</dbReference>
<dbReference type="InterPro" id="IPR053926">
    <property type="entry name" value="RecX_HTH_1st"/>
</dbReference>
<dbReference type="InterPro" id="IPR053924">
    <property type="entry name" value="RecX_HTH_2nd"/>
</dbReference>
<dbReference type="InterPro" id="IPR053925">
    <property type="entry name" value="RecX_HTH_3rd"/>
</dbReference>
<dbReference type="InterPro" id="IPR003783">
    <property type="entry name" value="Regulatory_RecX"/>
</dbReference>
<dbReference type="InterPro" id="IPR036388">
    <property type="entry name" value="WH-like_DNA-bd_sf"/>
</dbReference>
<dbReference type="NCBIfam" id="NF010733">
    <property type="entry name" value="PRK14135.1"/>
    <property type="match status" value="1"/>
</dbReference>
<dbReference type="PANTHER" id="PTHR33602">
    <property type="entry name" value="REGULATORY PROTEIN RECX FAMILY PROTEIN"/>
    <property type="match status" value="1"/>
</dbReference>
<dbReference type="PANTHER" id="PTHR33602:SF1">
    <property type="entry name" value="REGULATORY PROTEIN RECX FAMILY PROTEIN"/>
    <property type="match status" value="1"/>
</dbReference>
<dbReference type="Pfam" id="PF21982">
    <property type="entry name" value="RecX_HTH1"/>
    <property type="match status" value="1"/>
</dbReference>
<dbReference type="Pfam" id="PF02631">
    <property type="entry name" value="RecX_HTH2"/>
    <property type="match status" value="1"/>
</dbReference>
<dbReference type="Pfam" id="PF21981">
    <property type="entry name" value="RecX_HTH3"/>
    <property type="match status" value="1"/>
</dbReference>
<feature type="chain" id="PRO_0000162478" description="Regulatory protein RecX">
    <location>
        <begin position="1"/>
        <end position="258"/>
    </location>
</feature>
<proteinExistence type="inferred from homology"/>
<comment type="function">
    <text evidence="1">Modulates RecA activity.</text>
</comment>
<comment type="subcellular location">
    <subcellularLocation>
        <location evidence="2">Cytoplasm</location>
    </subcellularLocation>
</comment>
<comment type="similarity">
    <text evidence="2">Belongs to the RecX family.</text>
</comment>
<protein>
    <recommendedName>
        <fullName>Regulatory protein RecX</fullName>
    </recommendedName>
</protein>
<organism>
    <name type="scientific">Streptococcus agalactiae serotype V (strain ATCC BAA-611 / 2603 V/R)</name>
    <dbReference type="NCBI Taxonomy" id="208435"/>
    <lineage>
        <taxon>Bacteria</taxon>
        <taxon>Bacillati</taxon>
        <taxon>Bacillota</taxon>
        <taxon>Bacilli</taxon>
        <taxon>Lactobacillales</taxon>
        <taxon>Streptococcaceae</taxon>
        <taxon>Streptococcus</taxon>
    </lineage>
</organism>
<evidence type="ECO:0000250" key="1"/>
<evidence type="ECO:0000305" key="2"/>
<name>RECX_STRA5</name>